<comment type="function">
    <text evidence="3 4 5 7 8 9">Protease component of the SPS-sensor system, which regulates the expression of several amino acid-metabolizing enzymes and amino acid- and peptide-permeases in response to extracellular amino acid levels by controlling the activity of two transcription factors, STP1 and STP2. Catalyzes the activation of these transcription factors, which are synthesized as latent cytoplasmic precursors, by proteolytic removal of an N-terminal inhibitory domain containing cytoplasmic retention motifs. SSY5 binds as an inactive protease complex to STP1. In response to extracellular amino acids and dependent on the other SPS-sensor components, the inhibitory propeptide is induced to dissociate, and thereby enables the catalytic domain to process STP1.</text>
</comment>
<comment type="subunit">
    <text>Component of the plasma membrane SPS (SSY1-PTR3-SSY5) amino acid sensor complex.</text>
</comment>
<comment type="subcellular location">
    <subcellularLocation>
        <location evidence="3">Cell membrane</location>
        <topology evidence="3">Peripheral membrane protein</topology>
        <orientation evidence="3">Cytoplasmic side</orientation>
    </subcellularLocation>
</comment>
<comment type="induction">
    <text>Down-regulated after extracellular amino-acid addition.</text>
</comment>
<comment type="PTM">
    <text evidence="6">The propeptide is autoproteolytically cleaved from the catalytic domain but remains associated, forming an inactive protease complex. This processing occurs even in the absence of signaling.</text>
</comment>
<comment type="similarity">
    <text evidence="10">Belongs to the peptidase S64 family.</text>
</comment>
<comment type="sequence caution" evidence="10">
    <conflict type="frameshift">
        <sequence resource="EMBL-CDS" id="CAA89451"/>
    </conflict>
</comment>
<protein>
    <recommendedName>
        <fullName>SPS-sensor serine protease component SSY5</fullName>
    </recommendedName>
    <alternativeName>
        <fullName>Endoprotease SSY5</fullName>
    </alternativeName>
</protein>
<dbReference type="EMBL" id="Z49431">
    <property type="protein sequence ID" value="CAA89451.1"/>
    <property type="status" value="ALT_FRAME"/>
    <property type="molecule type" value="Genomic_DNA"/>
</dbReference>
<dbReference type="EMBL" id="BK006943">
    <property type="protein sequence ID" value="DAA08647.1"/>
    <property type="molecule type" value="Genomic_DNA"/>
</dbReference>
<dbReference type="PIR" id="S56939">
    <property type="entry name" value="S56939"/>
</dbReference>
<dbReference type="RefSeq" id="NP_012379.2">
    <property type="nucleotide sequence ID" value="NM_001181589.1"/>
</dbReference>
<dbReference type="SMR" id="P47002"/>
<dbReference type="BioGRID" id="33604">
    <property type="interactions" value="30"/>
</dbReference>
<dbReference type="DIP" id="DIP-6591N"/>
<dbReference type="FunCoup" id="P47002">
    <property type="interactions" value="37"/>
</dbReference>
<dbReference type="IntAct" id="P47002">
    <property type="interactions" value="1"/>
</dbReference>
<dbReference type="STRING" id="4932.YJL156C"/>
<dbReference type="MEROPS" id="S64.001"/>
<dbReference type="iPTMnet" id="P47002"/>
<dbReference type="PaxDb" id="4932-YJL156C"/>
<dbReference type="PeptideAtlas" id="P47002"/>
<dbReference type="EnsemblFungi" id="YJL156C_mRNA">
    <property type="protein sequence ID" value="YJL156C"/>
    <property type="gene ID" value="YJL156C"/>
</dbReference>
<dbReference type="GeneID" id="853285"/>
<dbReference type="KEGG" id="sce:YJL156C"/>
<dbReference type="AGR" id="SGD:S000003692"/>
<dbReference type="SGD" id="S000003692">
    <property type="gene designation" value="SSY5"/>
</dbReference>
<dbReference type="VEuPathDB" id="FungiDB:YJL156C"/>
<dbReference type="eggNOG" id="ENOG502QR0D">
    <property type="taxonomic scope" value="Eukaryota"/>
</dbReference>
<dbReference type="HOGENOM" id="CLU_012881_1_0_1"/>
<dbReference type="InParanoid" id="P47002"/>
<dbReference type="OMA" id="VGMLHSY"/>
<dbReference type="OrthoDB" id="4096087at2759"/>
<dbReference type="BioCyc" id="YEAST:G3O-31596-MONOMER"/>
<dbReference type="BioGRID-ORCS" id="853285">
    <property type="hits" value="1 hit in 10 CRISPR screens"/>
</dbReference>
<dbReference type="PRO" id="PR:P47002"/>
<dbReference type="Proteomes" id="UP000002311">
    <property type="component" value="Chromosome X"/>
</dbReference>
<dbReference type="RNAct" id="P47002">
    <property type="molecule type" value="protein"/>
</dbReference>
<dbReference type="GO" id="GO:0005886">
    <property type="term" value="C:plasma membrane"/>
    <property type="evidence" value="ECO:0000314"/>
    <property type="project" value="SGD"/>
</dbReference>
<dbReference type="GO" id="GO:0004252">
    <property type="term" value="F:serine-type endopeptidase activity"/>
    <property type="evidence" value="ECO:0000314"/>
    <property type="project" value="SGD"/>
</dbReference>
<dbReference type="GO" id="GO:0016540">
    <property type="term" value="P:protein autoprocessing"/>
    <property type="evidence" value="ECO:0000315"/>
    <property type="project" value="SGD"/>
</dbReference>
<dbReference type="GO" id="GO:0016485">
    <property type="term" value="P:protein processing"/>
    <property type="evidence" value="ECO:0000314"/>
    <property type="project" value="SGD"/>
</dbReference>
<dbReference type="GO" id="GO:0043200">
    <property type="term" value="P:response to amino acid"/>
    <property type="evidence" value="ECO:0000315"/>
    <property type="project" value="SGD"/>
</dbReference>
<dbReference type="InterPro" id="IPR009003">
    <property type="entry name" value="Peptidase_S1_PA"/>
</dbReference>
<dbReference type="InterPro" id="IPR012985">
    <property type="entry name" value="Peptidase_S64_Ssy5"/>
</dbReference>
<dbReference type="Pfam" id="PF08192">
    <property type="entry name" value="Peptidase_S64"/>
    <property type="match status" value="1"/>
</dbReference>
<dbReference type="PIRSF" id="PIRSF011716">
    <property type="entry name" value="Peptidase_S64_Ssy5"/>
    <property type="match status" value="1"/>
</dbReference>
<dbReference type="SUPFAM" id="SSF50494">
    <property type="entry name" value="Trypsin-like serine proteases"/>
    <property type="match status" value="1"/>
</dbReference>
<name>SSY5_YEAST</name>
<sequence>MVRFFGLNKKKNEEKENTDLPADNEQNAAETSSSNVSGNEERIDPNSHDTNPENANNDDASTTFGSSIQSSSIFSRGRMTYGTGASSSMATSEMRSHSSGHSGSKNSKNLQGFKDVGKPLRAVSFLSPVKEEESQDTQNTLDVSSSTSSTLATSENARENSFTSRRSITLEYIHKSLSELEENLVDIMDDIHQDVISISKAVIEAIEYFKEFLPTTRDRIPYRISLEKSSSLRKINKIVLHFLDNLLVSDAFSNSRSILLRRFYFFLKKLNLITDDDLISESGVLPCLSVFCIGSHCNLPSMDKLGMILDELTKMDSSIISDQEGAFIAPILRGITPKSSILTIMFGLPNLQHEHYEMIKVLYSLFPDVHMYCVKDYIKKAASAVGSIPSHTAATIDTIAPTKFQFSPPYAVSENPLELPISMSLSTETSAKITGTLGGYLFPQTGSDKKFSQFASCSFAITCAHVVLSEKQDYPNVMVPSNVLQTSYKKVLTKESDRYPDGSVEKTAFLEEVQRIDQNLNWQKSNKFGQVVWGERAIVDHRLSDFAIIKVNSSFKCQNTLGNGLKSFPDPTLRFQNLHVKRKIFKMKPGMKVFKIGASTGYTSGELNSTKLVYWADGKLQSSEFVVASPTPLFASAGDSGAWILTKLEDRLGLGLVGMLHSYDGEQRQFGLFTPIGDILERLHAVTKIQWDIDPQLDG</sequence>
<organism>
    <name type="scientific">Saccharomyces cerevisiae (strain ATCC 204508 / S288c)</name>
    <name type="common">Baker's yeast</name>
    <dbReference type="NCBI Taxonomy" id="559292"/>
    <lineage>
        <taxon>Eukaryota</taxon>
        <taxon>Fungi</taxon>
        <taxon>Dikarya</taxon>
        <taxon>Ascomycota</taxon>
        <taxon>Saccharomycotina</taxon>
        <taxon>Saccharomycetes</taxon>
        <taxon>Saccharomycetales</taxon>
        <taxon>Saccharomycetaceae</taxon>
        <taxon>Saccharomyces</taxon>
    </lineage>
</organism>
<reference key="1">
    <citation type="journal article" date="1996" name="EMBO J.">
        <title>Complete nucleotide sequence of Saccharomyces cerevisiae chromosome X.</title>
        <authorList>
            <person name="Galibert F."/>
            <person name="Alexandraki D."/>
            <person name="Baur A."/>
            <person name="Boles E."/>
            <person name="Chalwatzis N."/>
            <person name="Chuat J.-C."/>
            <person name="Coster F."/>
            <person name="Cziepluch C."/>
            <person name="de Haan M."/>
            <person name="Domdey H."/>
            <person name="Durand P."/>
            <person name="Entian K.-D."/>
            <person name="Gatius M."/>
            <person name="Goffeau A."/>
            <person name="Grivell L.A."/>
            <person name="Hennemann A."/>
            <person name="Herbert C.J."/>
            <person name="Heumann K."/>
            <person name="Hilger F."/>
            <person name="Hollenberg C.P."/>
            <person name="Huang M.-E."/>
            <person name="Jacq C."/>
            <person name="Jauniaux J.-C."/>
            <person name="Katsoulou C."/>
            <person name="Kirchrath L."/>
            <person name="Kleine K."/>
            <person name="Kordes E."/>
            <person name="Koetter P."/>
            <person name="Liebl S."/>
            <person name="Louis E.J."/>
            <person name="Manus V."/>
            <person name="Mewes H.-W."/>
            <person name="Miosga T."/>
            <person name="Obermaier B."/>
            <person name="Perea J."/>
            <person name="Pohl T.M."/>
            <person name="Portetelle D."/>
            <person name="Pujol A."/>
            <person name="Purnelle B."/>
            <person name="Ramezani Rad M."/>
            <person name="Rasmussen S.W."/>
            <person name="Rose M."/>
            <person name="Rossau R."/>
            <person name="Schaaff-Gerstenschlaeger I."/>
            <person name="Smits P.H.M."/>
            <person name="Scarcez T."/>
            <person name="Soriano N."/>
            <person name="To Van D."/>
            <person name="Tzermia M."/>
            <person name="Van Broekhoven A."/>
            <person name="Vandenbol M."/>
            <person name="Wedler H."/>
            <person name="von Wettstein D."/>
            <person name="Wambutt R."/>
            <person name="Zagulski M."/>
            <person name="Zollner A."/>
            <person name="Karpfinger-Hartl L."/>
        </authorList>
    </citation>
    <scope>NUCLEOTIDE SEQUENCE [LARGE SCALE GENOMIC DNA]</scope>
    <source>
        <strain>ATCC 204508 / S288c</strain>
    </source>
</reference>
<reference key="2">
    <citation type="journal article" date="2014" name="G3 (Bethesda)">
        <title>The reference genome sequence of Saccharomyces cerevisiae: Then and now.</title>
        <authorList>
            <person name="Engel S.R."/>
            <person name="Dietrich F.S."/>
            <person name="Fisk D.G."/>
            <person name="Binkley G."/>
            <person name="Balakrishnan R."/>
            <person name="Costanzo M.C."/>
            <person name="Dwight S.S."/>
            <person name="Hitz B.C."/>
            <person name="Karra K."/>
            <person name="Nash R.S."/>
            <person name="Weng S."/>
            <person name="Wong E.D."/>
            <person name="Lloyd P."/>
            <person name="Skrzypek M.S."/>
            <person name="Miyasato S.R."/>
            <person name="Simison M."/>
            <person name="Cherry J.M."/>
        </authorList>
    </citation>
    <scope>GENOME REANNOTATION</scope>
    <source>
        <strain>ATCC 204508 / S288c</strain>
    </source>
</reference>
<reference key="3">
    <citation type="journal article" date="2006" name="Eukaryot. Cell">
        <title>Mapping of an internal protease cleavage site in the Ssy5p component of the amino acid sensor of Saccharomyces cerevisiae and functional characterization of the resulting pro- and protease domains by gain-of-function genetics.</title>
        <authorList>
            <person name="Poulsen P."/>
            <person name="Lo Leggio L."/>
            <person name="Kielland-Brandt M.C."/>
        </authorList>
    </citation>
    <scope>PROTEIN SEQUENCE OF 382-399</scope>
    <scope>FUNCTION</scope>
    <scope>MUTAGENESIS OF GLU-131; PHE-575; GLN-576; LYS-581 AND PRO-632</scope>
</reference>
<reference key="4">
    <citation type="journal article" date="1998" name="Yeast">
        <title>Mutations in five loci affecting GAP1-independent uptake of neutral amino acids in yeast.</title>
        <authorList>
            <person name="Joergensen M.U."/>
            <person name="Bruun M.B."/>
            <person name="Didion T."/>
            <person name="Kielland-Brandt M.C."/>
        </authorList>
    </citation>
    <scope>IDENTIFICATION</scope>
</reference>
<reference key="5">
    <citation type="journal article" date="2001" name="Mol. Cell. Biol.">
        <title>Genetic and biochemical analysis of the yeast plasma membrane Ssy1p-Ptr3p-Ssy5p sensor of extracellular amino acids.</title>
        <authorList>
            <person name="Forsberg H."/>
            <person name="Ljungdahl P.O."/>
        </authorList>
    </citation>
    <scope>FUNCTION</scope>
    <scope>SUBCELLULAR LOCATION</scope>
</reference>
<reference key="6">
    <citation type="journal article" date="2001" name="Mol. Microbiol.">
        <title>Genetic analysis of the signalling pathway activated by external amino acids in Saccharomyces cerevisiae.</title>
        <authorList>
            <person name="Bernard F."/>
            <person name="Andre B."/>
        </authorList>
    </citation>
    <scope>FUNCTION</scope>
    <scope>INTERACTION WITH PTR3</scope>
</reference>
<reference key="7">
    <citation type="journal article" date="2002" name="Genes Dev.">
        <title>Receptor-mediated endoproteolytic activation of two transcription factors in yeast.</title>
        <authorList>
            <person name="Andreasson C."/>
            <person name="Ljungdahl P.O."/>
        </authorList>
    </citation>
    <scope>FUNCTION</scope>
</reference>
<reference key="8">
    <citation type="journal article" date="2004" name="Mol. Cell. Biol.">
        <title>Amino acid signaling in yeast: casein kinase I and the Ssy5 endoprotease are key determinants of endoproteolytic activation of the membrane-bound Stp1 transcription factor.</title>
        <authorList>
            <person name="Abdel-Sater F."/>
            <person name="El Bakkoury M."/>
            <person name="Urrestarazu A."/>
            <person name="Vissers S."/>
            <person name="Andre B."/>
        </authorList>
    </citation>
    <scope>AUTOCATALYTIC CLEAVAGE</scope>
    <scope>CLEAVAGE OF STP1</scope>
    <scope>MUTAGENESIS OF 420-PRO--SER-424 AND SER-640</scope>
</reference>
<reference key="9">
    <citation type="journal article" date="2005" name="Eukaryot. Cell">
        <title>Constitutive signal transduction by mutant Ssy5p and Ptr3p components of the SPS amino acid sensor system in Saccharomyces cerevisiae.</title>
        <authorList>
            <person name="Poulsen P."/>
            <person name="Wu B."/>
            <person name="Gaber R.F."/>
            <person name="Kielland-Brandt M.C."/>
        </authorList>
    </citation>
    <scope>FUNCTION</scope>
    <scope>IDENTIFICATION OF FRAMESHIFT</scope>
    <scope>MUTAGENESIS OF GLU-512</scope>
</reference>
<reference key="10">
    <citation type="journal article" date="2006" name="Genes Dev.">
        <title>Regulation of transcription factor latency by receptor-activated proteolysis.</title>
        <authorList>
            <person name="Andreasson C."/>
            <person name="Heessen S."/>
            <person name="Ljungdahl P.O."/>
        </authorList>
    </citation>
    <scope>FUNCTION</scope>
    <scope>INTERACTION WITH STP1</scope>
</reference>
<feature type="propeptide" id="PRO_0000377374" evidence="8">
    <location>
        <begin position="1"/>
        <end position="381"/>
    </location>
</feature>
<feature type="chain" id="PRO_0000072232" description="SPS-sensor serine protease component SSY5">
    <location>
        <begin position="382"/>
        <end position="699"/>
    </location>
</feature>
<feature type="region of interest" description="Disordered" evidence="2">
    <location>
        <begin position="1"/>
        <end position="113"/>
    </location>
</feature>
<feature type="region of interest" description="Disordered" evidence="2">
    <location>
        <begin position="128"/>
        <end position="158"/>
    </location>
</feature>
<feature type="region of interest" description="Serine protease">
    <location>
        <begin position="459"/>
        <end position="699"/>
    </location>
</feature>
<feature type="compositionally biased region" description="Polar residues" evidence="2">
    <location>
        <begin position="24"/>
        <end position="38"/>
    </location>
</feature>
<feature type="compositionally biased region" description="Basic and acidic residues" evidence="2">
    <location>
        <begin position="39"/>
        <end position="51"/>
    </location>
</feature>
<feature type="compositionally biased region" description="Low complexity" evidence="2">
    <location>
        <begin position="61"/>
        <end position="78"/>
    </location>
</feature>
<feature type="compositionally biased region" description="Polar residues" evidence="2">
    <location>
        <begin position="83"/>
        <end position="93"/>
    </location>
</feature>
<feature type="compositionally biased region" description="Low complexity" evidence="2">
    <location>
        <begin position="97"/>
        <end position="109"/>
    </location>
</feature>
<feature type="compositionally biased region" description="Low complexity" evidence="2">
    <location>
        <begin position="144"/>
        <end position="154"/>
    </location>
</feature>
<feature type="active site" description="Charge relay system" evidence="1">
    <location>
        <position position="465"/>
    </location>
</feature>
<feature type="active site" description="Charge relay system" evidence="1">
    <location>
        <position position="545"/>
    </location>
</feature>
<feature type="active site" description="Charge relay system" evidence="1">
    <location>
        <position position="640"/>
    </location>
</feature>
<feature type="mutagenesis site" description="In SSY5-13; constitutively active, confers 9.3% increased STP1 processing in the absence of amino acids." evidence="8">
    <original>E</original>
    <variation>K</variation>
    <location>
        <position position="131"/>
    </location>
</feature>
<feature type="mutagenesis site" description="Prevents maturation and amino-acid-induced STP1 cleavage." evidence="6">
    <location>
        <begin position="420"/>
        <end position="424"/>
    </location>
</feature>
<feature type="mutagenesis site" description="In SSY5-6; constitutively active, confers 30% increased STP1 processing in the absence of amino acids." evidence="7">
    <original>E</original>
    <variation>K</variation>
    <location>
        <position position="512"/>
    </location>
</feature>
<feature type="mutagenesis site" description="In SSY5-14; constitutively active, confers 30% increased STP1 processing in the absence of amino acids." evidence="8">
    <original>F</original>
    <variation>V</variation>
    <location>
        <position position="575"/>
    </location>
</feature>
<feature type="mutagenesis site" description="In SSY5-15; constitutively active, confers 30% increased STP1 processing in the absence of amino acids." evidence="8">
    <original>Q</original>
    <variation>P</variation>
    <location>
        <position position="576"/>
    </location>
</feature>
<feature type="mutagenesis site" description="In SSY5-18; constitutively active, confers 15.5% increased STP1 processing in the absence of amino acids; when associated with H-632." evidence="8">
    <original>K</original>
    <variation>N</variation>
    <location>
        <position position="581"/>
    </location>
</feature>
<feature type="mutagenesis site" description="In SSY5-18; constitutively active, confers 15.5% increased STP1 processing in the absence of amino acids; when associated with N-581." evidence="8">
    <original>P</original>
    <variation>H</variation>
    <location>
        <position position="632"/>
    </location>
</feature>
<feature type="mutagenesis site" description="Impairs maturation and amino acid-induced STP1 cleavage." evidence="6">
    <original>S</original>
    <variation>A</variation>
    <location>
        <position position="640"/>
    </location>
</feature>
<evidence type="ECO:0000255" key="1"/>
<evidence type="ECO:0000256" key="2">
    <source>
        <dbReference type="SAM" id="MobiDB-lite"/>
    </source>
</evidence>
<evidence type="ECO:0000269" key="3">
    <source>
    </source>
</evidence>
<evidence type="ECO:0000269" key="4">
    <source>
    </source>
</evidence>
<evidence type="ECO:0000269" key="5">
    <source>
    </source>
</evidence>
<evidence type="ECO:0000269" key="6">
    <source>
    </source>
</evidence>
<evidence type="ECO:0000269" key="7">
    <source>
    </source>
</evidence>
<evidence type="ECO:0000269" key="8">
    <source>
    </source>
</evidence>
<evidence type="ECO:0000269" key="9">
    <source>
    </source>
</evidence>
<evidence type="ECO:0000305" key="10"/>
<gene>
    <name type="primary">SSY5</name>
    <name type="synonym">APF8</name>
    <name type="ordered locus">YJL156C</name>
    <name type="ORF">J0570</name>
</gene>
<proteinExistence type="evidence at protein level"/>
<accession>P47002</accession>
<accession>D6VW31</accession>
<keyword id="KW-0068">Autocatalytic cleavage</keyword>
<keyword id="KW-1003">Cell membrane</keyword>
<keyword id="KW-0903">Direct protein sequencing</keyword>
<keyword id="KW-0378">Hydrolase</keyword>
<keyword id="KW-0472">Membrane</keyword>
<keyword id="KW-0645">Protease</keyword>
<keyword id="KW-1185">Reference proteome</keyword>
<keyword id="KW-0865">Zymogen</keyword>